<evidence type="ECO:0000255" key="1">
    <source>
        <dbReference type="HAMAP-Rule" id="MF_02100"/>
    </source>
</evidence>
<reference key="1">
    <citation type="submission" date="2008-10" db="EMBL/GenBank/DDBJ databases">
        <title>Genome sequence of Bacillus anthracis str. CDC 684.</title>
        <authorList>
            <person name="Dodson R.J."/>
            <person name="Munk A.C."/>
            <person name="Brettin T."/>
            <person name="Bruce D."/>
            <person name="Detter C."/>
            <person name="Tapia R."/>
            <person name="Han C."/>
            <person name="Sutton G."/>
            <person name="Sims D."/>
        </authorList>
    </citation>
    <scope>NUCLEOTIDE SEQUENCE [LARGE SCALE GENOMIC DNA]</scope>
    <source>
        <strain>CDC 684 / NRRL 3495</strain>
    </source>
</reference>
<sequence length="212" mass="24277">MGTEFNGLFDEWAHTYDSFVQGEDIQYKEVFAHYEDILEDVVNKSFGNVLEFGVGTGNLTNKLLLAGRTVYGIEPSREMRMIAKEKLPKEFSITEGDFLSFEVPNSIDTIVSTYAFHHLTDDEKNVAIAKYSQLLNKGGKIVFADTIFADQDAYDKTVEAAKQRGFHQLANDLQTEYYTRIPVMQTIFENNGFHVTFTRLNHFVWVMEATKQ</sequence>
<comment type="function">
    <text evidence="1">Could be a S-adenosyl-L-methionine-dependent methyltransferase.</text>
</comment>
<comment type="similarity">
    <text evidence="1">Belongs to the methyltransferase superfamily. YrrT family.</text>
</comment>
<proteinExistence type="inferred from homology"/>
<protein>
    <recommendedName>
        <fullName evidence="1">Uncharacterized methyltransferase BAMEG_4640</fullName>
        <ecNumber evidence="1">2.1.1.-</ecNumber>
    </recommendedName>
</protein>
<organism>
    <name type="scientific">Bacillus anthracis (strain CDC 684 / NRRL 3495)</name>
    <dbReference type="NCBI Taxonomy" id="568206"/>
    <lineage>
        <taxon>Bacteria</taxon>
        <taxon>Bacillati</taxon>
        <taxon>Bacillota</taxon>
        <taxon>Bacilli</taxon>
        <taxon>Bacillales</taxon>
        <taxon>Bacillaceae</taxon>
        <taxon>Bacillus</taxon>
        <taxon>Bacillus cereus group</taxon>
    </lineage>
</organism>
<name>Y4640_BACAC</name>
<feature type="chain" id="PRO_1000189547" description="Uncharacterized methyltransferase BAMEG_4640">
    <location>
        <begin position="1"/>
        <end position="212"/>
    </location>
</feature>
<feature type="binding site" evidence="1">
    <location>
        <position position="53"/>
    </location>
    <ligand>
        <name>S-adenosyl-L-methionine</name>
        <dbReference type="ChEBI" id="CHEBI:59789"/>
    </ligand>
</feature>
<feature type="binding site" evidence="1">
    <location>
        <position position="74"/>
    </location>
    <ligand>
        <name>S-adenosyl-L-methionine</name>
        <dbReference type="ChEBI" id="CHEBI:59789"/>
    </ligand>
</feature>
<feature type="binding site" evidence="1">
    <location>
        <position position="97"/>
    </location>
    <ligand>
        <name>S-adenosyl-L-methionine</name>
        <dbReference type="ChEBI" id="CHEBI:59789"/>
    </ligand>
</feature>
<accession>C3L5Y1</accession>
<dbReference type="EC" id="2.1.1.-" evidence="1"/>
<dbReference type="EMBL" id="CP001215">
    <property type="protein sequence ID" value="ACP16214.1"/>
    <property type="molecule type" value="Genomic_DNA"/>
</dbReference>
<dbReference type="RefSeq" id="WP_000536319.1">
    <property type="nucleotide sequence ID" value="NC_012581.1"/>
</dbReference>
<dbReference type="SMR" id="C3L5Y1"/>
<dbReference type="KEGG" id="bah:BAMEG_4640"/>
<dbReference type="HOGENOM" id="CLU_111961_0_0_9"/>
<dbReference type="GO" id="GO:0008757">
    <property type="term" value="F:S-adenosylmethionine-dependent methyltransferase activity"/>
    <property type="evidence" value="ECO:0007669"/>
    <property type="project" value="UniProtKB-UniRule"/>
</dbReference>
<dbReference type="GO" id="GO:0032259">
    <property type="term" value="P:methylation"/>
    <property type="evidence" value="ECO:0007669"/>
    <property type="project" value="UniProtKB-KW"/>
</dbReference>
<dbReference type="CDD" id="cd02440">
    <property type="entry name" value="AdoMet_MTases"/>
    <property type="match status" value="1"/>
</dbReference>
<dbReference type="Gene3D" id="3.40.50.150">
    <property type="entry name" value="Vaccinia Virus protein VP39"/>
    <property type="match status" value="1"/>
</dbReference>
<dbReference type="HAMAP" id="MF_02100">
    <property type="entry name" value="Methyltr_YrrT"/>
    <property type="match status" value="1"/>
</dbReference>
<dbReference type="InterPro" id="IPR041698">
    <property type="entry name" value="Methyltransf_25"/>
</dbReference>
<dbReference type="InterPro" id="IPR029063">
    <property type="entry name" value="SAM-dependent_MTases_sf"/>
</dbReference>
<dbReference type="InterPro" id="IPR023553">
    <property type="entry name" value="Uncharacterised_MeTfrase_YrrT"/>
</dbReference>
<dbReference type="PANTHER" id="PTHR43861:SF1">
    <property type="entry name" value="TRANS-ACONITATE 2-METHYLTRANSFERASE"/>
    <property type="match status" value="1"/>
</dbReference>
<dbReference type="PANTHER" id="PTHR43861">
    <property type="entry name" value="TRANS-ACONITATE 2-METHYLTRANSFERASE-RELATED"/>
    <property type="match status" value="1"/>
</dbReference>
<dbReference type="Pfam" id="PF13649">
    <property type="entry name" value="Methyltransf_25"/>
    <property type="match status" value="1"/>
</dbReference>
<dbReference type="SUPFAM" id="SSF53335">
    <property type="entry name" value="S-adenosyl-L-methionine-dependent methyltransferases"/>
    <property type="match status" value="1"/>
</dbReference>
<gene>
    <name type="ordered locus">BAMEG_4640</name>
</gene>
<keyword id="KW-0489">Methyltransferase</keyword>
<keyword id="KW-0949">S-adenosyl-L-methionine</keyword>
<keyword id="KW-0808">Transferase</keyword>